<gene>
    <name evidence="1" type="primary">ndhB2</name>
</gene>
<evidence type="ECO:0000255" key="1">
    <source>
        <dbReference type="HAMAP-Rule" id="MF_00445"/>
    </source>
</evidence>
<comment type="function">
    <text evidence="1">NDH shuttles electrons from NAD(P)H:plastoquinone, via FMN and iron-sulfur (Fe-S) centers, to quinones in the photosynthetic chain and possibly in a chloroplast respiratory chain. The immediate electron acceptor for the enzyme in this species is believed to be plastoquinone. Couples the redox reaction to proton translocation, and thus conserves the redox energy in a proton gradient.</text>
</comment>
<comment type="catalytic activity">
    <reaction evidence="1">
        <text>a plastoquinone + NADH + (n+1) H(+)(in) = a plastoquinol + NAD(+) + n H(+)(out)</text>
        <dbReference type="Rhea" id="RHEA:42608"/>
        <dbReference type="Rhea" id="RHEA-COMP:9561"/>
        <dbReference type="Rhea" id="RHEA-COMP:9562"/>
        <dbReference type="ChEBI" id="CHEBI:15378"/>
        <dbReference type="ChEBI" id="CHEBI:17757"/>
        <dbReference type="ChEBI" id="CHEBI:57540"/>
        <dbReference type="ChEBI" id="CHEBI:57945"/>
        <dbReference type="ChEBI" id="CHEBI:62192"/>
    </reaction>
</comment>
<comment type="catalytic activity">
    <reaction evidence="1">
        <text>a plastoquinone + NADPH + (n+1) H(+)(in) = a plastoquinol + NADP(+) + n H(+)(out)</text>
        <dbReference type="Rhea" id="RHEA:42612"/>
        <dbReference type="Rhea" id="RHEA-COMP:9561"/>
        <dbReference type="Rhea" id="RHEA-COMP:9562"/>
        <dbReference type="ChEBI" id="CHEBI:15378"/>
        <dbReference type="ChEBI" id="CHEBI:17757"/>
        <dbReference type="ChEBI" id="CHEBI:57783"/>
        <dbReference type="ChEBI" id="CHEBI:58349"/>
        <dbReference type="ChEBI" id="CHEBI:62192"/>
    </reaction>
</comment>
<comment type="subunit">
    <text evidence="1">NDH is composed of at least 16 different subunits, 5 of which are encoded in the nucleus.</text>
</comment>
<comment type="subcellular location">
    <subcellularLocation>
        <location evidence="1">Plastid</location>
        <location evidence="1">Chloroplast thylakoid membrane</location>
        <topology evidence="1">Multi-pass membrane protein</topology>
    </subcellularLocation>
</comment>
<comment type="similarity">
    <text evidence="1">Belongs to the complex I subunit 2 family.</text>
</comment>
<proteinExistence type="inferred from homology"/>
<geneLocation type="chloroplast"/>
<dbReference type="EC" id="7.1.1.-" evidence="1"/>
<dbReference type="EMBL" id="AP007232">
    <property type="protein sequence ID" value="BAE47640.1"/>
    <property type="molecule type" value="Genomic_DNA"/>
</dbReference>
<dbReference type="EMBL" id="DQ383816">
    <property type="protein sequence ID" value="ABD47277.1"/>
    <property type="molecule type" value="Genomic_DNA"/>
</dbReference>
<dbReference type="SMR" id="P0CC81"/>
<dbReference type="KEGG" id="lsv:3772851"/>
<dbReference type="KEGG" id="lsv:3772852"/>
<dbReference type="OrthoDB" id="1876953at2759"/>
<dbReference type="GO" id="GO:0009535">
    <property type="term" value="C:chloroplast thylakoid membrane"/>
    <property type="evidence" value="ECO:0007669"/>
    <property type="project" value="UniProtKB-SubCell"/>
</dbReference>
<dbReference type="GO" id="GO:0008137">
    <property type="term" value="F:NADH dehydrogenase (ubiquinone) activity"/>
    <property type="evidence" value="ECO:0007669"/>
    <property type="project" value="InterPro"/>
</dbReference>
<dbReference type="GO" id="GO:0048038">
    <property type="term" value="F:quinone binding"/>
    <property type="evidence" value="ECO:0007669"/>
    <property type="project" value="UniProtKB-KW"/>
</dbReference>
<dbReference type="GO" id="GO:0042773">
    <property type="term" value="P:ATP synthesis coupled electron transport"/>
    <property type="evidence" value="ECO:0007669"/>
    <property type="project" value="InterPro"/>
</dbReference>
<dbReference type="GO" id="GO:0019684">
    <property type="term" value="P:photosynthesis, light reaction"/>
    <property type="evidence" value="ECO:0007669"/>
    <property type="project" value="UniProtKB-UniRule"/>
</dbReference>
<dbReference type="HAMAP" id="MF_00445">
    <property type="entry name" value="NDH1_NuoN_1"/>
    <property type="match status" value="1"/>
</dbReference>
<dbReference type="InterPro" id="IPR010096">
    <property type="entry name" value="NADH-Q_OxRdtase_suN/2"/>
</dbReference>
<dbReference type="InterPro" id="IPR001750">
    <property type="entry name" value="ND/Mrp_TM"/>
</dbReference>
<dbReference type="InterPro" id="IPR045693">
    <property type="entry name" value="Ndh2_N"/>
</dbReference>
<dbReference type="NCBIfam" id="TIGR01770">
    <property type="entry name" value="NDH_I_N"/>
    <property type="match status" value="1"/>
</dbReference>
<dbReference type="NCBIfam" id="NF002701">
    <property type="entry name" value="PRK02504.1"/>
    <property type="match status" value="1"/>
</dbReference>
<dbReference type="PANTHER" id="PTHR22773">
    <property type="entry name" value="NADH DEHYDROGENASE"/>
    <property type="match status" value="1"/>
</dbReference>
<dbReference type="Pfam" id="PF19530">
    <property type="entry name" value="Ndh2_N"/>
    <property type="match status" value="1"/>
</dbReference>
<dbReference type="Pfam" id="PF00361">
    <property type="entry name" value="Proton_antipo_M"/>
    <property type="match status" value="1"/>
</dbReference>
<dbReference type="PRINTS" id="PR01434">
    <property type="entry name" value="NADHDHGNASE5"/>
</dbReference>
<name>NU2C2_LACSA</name>
<feature type="chain" id="PRO_0000391278" description="NAD(P)H-quinone oxidoreductase subunit 2 B, chloroplastic">
    <location>
        <begin position="1"/>
        <end position="510"/>
    </location>
</feature>
<feature type="transmembrane region" description="Helical" evidence="1">
    <location>
        <begin position="24"/>
        <end position="44"/>
    </location>
</feature>
<feature type="transmembrane region" description="Helical" evidence="1">
    <location>
        <begin position="57"/>
        <end position="77"/>
    </location>
</feature>
<feature type="transmembrane region" description="Helical" evidence="1">
    <location>
        <begin position="99"/>
        <end position="119"/>
    </location>
</feature>
<feature type="transmembrane region" description="Helical" evidence="1">
    <location>
        <begin position="124"/>
        <end position="144"/>
    </location>
</feature>
<feature type="transmembrane region" description="Helical" evidence="1">
    <location>
        <begin position="149"/>
        <end position="169"/>
    </location>
</feature>
<feature type="transmembrane region" description="Helical" evidence="1">
    <location>
        <begin position="183"/>
        <end position="203"/>
    </location>
</feature>
<feature type="transmembrane region" description="Helical" evidence="1">
    <location>
        <begin position="227"/>
        <end position="247"/>
    </location>
</feature>
<feature type="transmembrane region" description="Helical" evidence="1">
    <location>
        <begin position="295"/>
        <end position="315"/>
    </location>
</feature>
<feature type="transmembrane region" description="Helical" evidence="1">
    <location>
        <begin position="323"/>
        <end position="343"/>
    </location>
</feature>
<feature type="transmembrane region" description="Helical" evidence="1">
    <location>
        <begin position="354"/>
        <end position="374"/>
    </location>
</feature>
<feature type="transmembrane region" description="Helical" evidence="1">
    <location>
        <begin position="395"/>
        <end position="415"/>
    </location>
</feature>
<feature type="transmembrane region" description="Helical" evidence="1">
    <location>
        <begin position="418"/>
        <end position="438"/>
    </location>
</feature>
<feature type="transmembrane region" description="Helical" evidence="1">
    <location>
        <begin position="484"/>
        <end position="504"/>
    </location>
</feature>
<protein>
    <recommendedName>
        <fullName evidence="1">NAD(P)H-quinone oxidoreductase subunit 2 B, chloroplastic</fullName>
        <ecNumber evidence="1">7.1.1.-</ecNumber>
    </recommendedName>
    <alternativeName>
        <fullName evidence="1">NAD(P)H dehydrogenase, subunit 2 B</fullName>
    </alternativeName>
    <alternativeName>
        <fullName evidence="1">NADH-plastoquinone oxidoreductase subunit 2 B</fullName>
    </alternativeName>
</protein>
<accession>P0CC81</accession>
<accession>Q1KXG0</accession>
<accession>Q332R8</accession>
<sequence length="510" mass="56689">MIWHVQNENFILDSTRIFMKAFHLLLFDGSLIFPECILIFGLILLLMIDSTSDQKDIPWLYFISSTSLVMSITSLLFRWREEPMISFSGNFQTNNFNEIFQFLILLCSTLCIPLSVEYIECTEMAITEFLLFVLTATIGGMFLCGANDLITIFVAPECFSLCSYLLSGYTKKDVRSNEATMKYLLMGGASSSILVHGFSWLYGSSGGEIELQEIVNGLINTQMYNSPGISIALIFITVGIGFKLSPAPSHQWTPDVYEGSPTPVVAFLSVTSKVAASASATRIFDIPFYFSSNEWHLLLEILAILSMILGNLIAITQTSMKRMLAYSSIGQIGYVIIGIIVGDSNDGYASMITYMLFYISMNLGTFACIVLFGLRTGTENIRDYAGLYTKDPFLALSLALCLLSLGGLPPLAGFFGKLYLFWCGWQAGLYFLVLIGLLTSVVSIYYYLKIIKLLMTGRNQEITPHVRNYRRSPLRSNNSIELSMIVCVIASTIPGISMNPIIAIAQDTLF</sequence>
<organism>
    <name type="scientific">Lactuca sativa</name>
    <name type="common">Garden lettuce</name>
    <dbReference type="NCBI Taxonomy" id="4236"/>
    <lineage>
        <taxon>Eukaryota</taxon>
        <taxon>Viridiplantae</taxon>
        <taxon>Streptophyta</taxon>
        <taxon>Embryophyta</taxon>
        <taxon>Tracheophyta</taxon>
        <taxon>Spermatophyta</taxon>
        <taxon>Magnoliopsida</taxon>
        <taxon>eudicotyledons</taxon>
        <taxon>Gunneridae</taxon>
        <taxon>Pentapetalae</taxon>
        <taxon>asterids</taxon>
        <taxon>campanulids</taxon>
        <taxon>Asterales</taxon>
        <taxon>Asteraceae</taxon>
        <taxon>Cichorioideae</taxon>
        <taxon>Cichorieae</taxon>
        <taxon>Lactucinae</taxon>
        <taxon>Lactuca</taxon>
    </lineage>
</organism>
<reference key="1">
    <citation type="journal article" date="2006" name="Transgenic Res.">
        <title>Efficient and stable transformation of Lactuca sativa L. cv. Cisco (lettuce) plastids.</title>
        <authorList>
            <person name="Kanamoto H."/>
            <person name="Yamashita A."/>
            <person name="Asao H."/>
            <person name="Okumura S."/>
            <person name="Takase H."/>
            <person name="Hattori M."/>
            <person name="Yokota A."/>
            <person name="Tomizawa K."/>
        </authorList>
    </citation>
    <scope>NUCLEOTIDE SEQUENCE [LARGE SCALE GENOMIC DNA]</scope>
    <source>
        <strain>cv. Cisco</strain>
    </source>
</reference>
<reference key="2">
    <citation type="submission" date="2006-01" db="EMBL/GenBank/DDBJ databases">
        <title>A comparison of the first two published chloroplast genomes in Asteraceae: Lactuca and Helianthus.</title>
        <authorList>
            <person name="Timme R.E."/>
            <person name="Kuehl J.V."/>
            <person name="Boore J.L."/>
            <person name="Jansen R.K."/>
        </authorList>
    </citation>
    <scope>NUCLEOTIDE SEQUENCE [LARGE SCALE GENOMIC DNA]</scope>
    <source>
        <strain>cv. Salinas</strain>
    </source>
</reference>
<keyword id="KW-0150">Chloroplast</keyword>
<keyword id="KW-0472">Membrane</keyword>
<keyword id="KW-0520">NAD</keyword>
<keyword id="KW-0521">NADP</keyword>
<keyword id="KW-0934">Plastid</keyword>
<keyword id="KW-0618">Plastoquinone</keyword>
<keyword id="KW-0874">Quinone</keyword>
<keyword id="KW-0793">Thylakoid</keyword>
<keyword id="KW-1278">Translocase</keyword>
<keyword id="KW-0812">Transmembrane</keyword>
<keyword id="KW-1133">Transmembrane helix</keyword>
<keyword id="KW-0813">Transport</keyword>